<name>NU3M_SIGOC</name>
<geneLocation type="mitochondrion"/>
<proteinExistence type="inferred from homology"/>
<sequence>MNLLMALFIDASLSLILISIAFWLPQLNIYTEKAGPYECGFDPLSSARLPFSMKFFLVAITFLLFDLEIALLLPLPWAIQIPKLSAMMVTSFILISVLALGLMYEWMNKGLEWTE</sequence>
<reference key="1">
    <citation type="journal article" date="1998" name="Mol. Biol. Evol.">
        <title>Molecular systematics and paleobiogeography of the South American sigmodontine rodents.</title>
        <authorList>
            <person name="Engel S.R."/>
            <person name="Hogan K.M."/>
            <person name="Taylor J.F."/>
            <person name="Davis S.K."/>
        </authorList>
    </citation>
    <scope>NUCLEOTIDE SEQUENCE [GENOMIC DNA]</scope>
</reference>
<feature type="chain" id="PRO_0000117833" description="NADH-ubiquinone oxidoreductase chain 3">
    <location>
        <begin position="1"/>
        <end position="115"/>
    </location>
</feature>
<feature type="transmembrane region" description="Helical" evidence="3">
    <location>
        <begin position="3"/>
        <end position="23"/>
    </location>
</feature>
<feature type="transmembrane region" description="Helical" evidence="3">
    <location>
        <begin position="55"/>
        <end position="75"/>
    </location>
</feature>
<feature type="transmembrane region" description="Helical" evidence="3">
    <location>
        <begin position="84"/>
        <end position="104"/>
    </location>
</feature>
<comment type="function">
    <text evidence="1">Core subunit of the mitochondrial membrane respiratory chain NADH dehydrogenase (Complex I) which catalyzes electron transfer from NADH through the respiratory chain, using ubiquinone as an electron acceptor. Essential for the catalytic activity of complex I.</text>
</comment>
<comment type="catalytic activity">
    <reaction evidence="1">
        <text>a ubiquinone + NADH + 5 H(+)(in) = a ubiquinol + NAD(+) + 4 H(+)(out)</text>
        <dbReference type="Rhea" id="RHEA:29091"/>
        <dbReference type="Rhea" id="RHEA-COMP:9565"/>
        <dbReference type="Rhea" id="RHEA-COMP:9566"/>
        <dbReference type="ChEBI" id="CHEBI:15378"/>
        <dbReference type="ChEBI" id="CHEBI:16389"/>
        <dbReference type="ChEBI" id="CHEBI:17976"/>
        <dbReference type="ChEBI" id="CHEBI:57540"/>
        <dbReference type="ChEBI" id="CHEBI:57945"/>
        <dbReference type="EC" id="7.1.1.2"/>
    </reaction>
</comment>
<comment type="subunit">
    <text evidence="1">Core subunit of respiratory chain NADH dehydrogenase (Complex I) which is composed of 45 different subunits. Interacts with TMEM186. Interacts with TMEM242 (By similarity).</text>
</comment>
<comment type="subcellular location">
    <subcellularLocation>
        <location evidence="2">Mitochondrion inner membrane</location>
        <topology evidence="3">Multi-pass membrane protein</topology>
    </subcellularLocation>
</comment>
<comment type="similarity">
    <text evidence="4">Belongs to the complex I subunit 3 family.</text>
</comment>
<evidence type="ECO:0000250" key="1">
    <source>
        <dbReference type="UniProtKB" id="P03897"/>
    </source>
</evidence>
<evidence type="ECO:0000250" key="2">
    <source>
        <dbReference type="UniProtKB" id="P03898"/>
    </source>
</evidence>
<evidence type="ECO:0000255" key="3"/>
<evidence type="ECO:0000305" key="4"/>
<organism>
    <name type="scientific">Sigmodon ochrognathus</name>
    <name type="common">Yellow-nosed cotton rat</name>
    <dbReference type="NCBI Taxonomy" id="56214"/>
    <lineage>
        <taxon>Eukaryota</taxon>
        <taxon>Metazoa</taxon>
        <taxon>Chordata</taxon>
        <taxon>Craniata</taxon>
        <taxon>Vertebrata</taxon>
        <taxon>Euteleostomi</taxon>
        <taxon>Mammalia</taxon>
        <taxon>Eutheria</taxon>
        <taxon>Euarchontoglires</taxon>
        <taxon>Glires</taxon>
        <taxon>Rodentia</taxon>
        <taxon>Myomorpha</taxon>
        <taxon>Muroidea</taxon>
        <taxon>Cricetidae</taxon>
        <taxon>Sigmodontinae</taxon>
        <taxon>Sigmodon</taxon>
    </lineage>
</organism>
<keyword id="KW-0249">Electron transport</keyword>
<keyword id="KW-0472">Membrane</keyword>
<keyword id="KW-0496">Mitochondrion</keyword>
<keyword id="KW-0999">Mitochondrion inner membrane</keyword>
<keyword id="KW-0520">NAD</keyword>
<keyword id="KW-0679">Respiratory chain</keyword>
<keyword id="KW-1278">Translocase</keyword>
<keyword id="KW-0812">Transmembrane</keyword>
<keyword id="KW-1133">Transmembrane helix</keyword>
<keyword id="KW-0813">Transport</keyword>
<keyword id="KW-0830">Ubiquinone</keyword>
<protein>
    <recommendedName>
        <fullName evidence="1">NADH-ubiquinone oxidoreductase chain 3</fullName>
        <ecNumber evidence="1">7.1.1.2</ecNumber>
    </recommendedName>
    <alternativeName>
        <fullName>NADH dehydrogenase subunit 3</fullName>
    </alternativeName>
</protein>
<dbReference type="EC" id="7.1.1.2" evidence="1"/>
<dbReference type="EMBL" id="U83822">
    <property type="protein sequence ID" value="AAB87241.1"/>
    <property type="molecule type" value="Genomic_DNA"/>
</dbReference>
<dbReference type="SMR" id="O21563"/>
<dbReference type="GO" id="GO:0005743">
    <property type="term" value="C:mitochondrial inner membrane"/>
    <property type="evidence" value="ECO:0000250"/>
    <property type="project" value="UniProtKB"/>
</dbReference>
<dbReference type="GO" id="GO:0030964">
    <property type="term" value="C:NADH dehydrogenase complex"/>
    <property type="evidence" value="ECO:0007669"/>
    <property type="project" value="TreeGrafter"/>
</dbReference>
<dbReference type="GO" id="GO:0008137">
    <property type="term" value="F:NADH dehydrogenase (ubiquinone) activity"/>
    <property type="evidence" value="ECO:0000250"/>
    <property type="project" value="UniProtKB"/>
</dbReference>
<dbReference type="GO" id="GO:0006120">
    <property type="term" value="P:mitochondrial electron transport, NADH to ubiquinone"/>
    <property type="evidence" value="ECO:0000250"/>
    <property type="project" value="UniProtKB"/>
</dbReference>
<dbReference type="FunFam" id="1.20.58.1610:FF:000004">
    <property type="entry name" value="NADH-quinone oxidoreductase subunit A"/>
    <property type="match status" value="1"/>
</dbReference>
<dbReference type="Gene3D" id="1.20.58.1610">
    <property type="entry name" value="NADH:ubiquinone/plastoquinone oxidoreductase, chain 3"/>
    <property type="match status" value="1"/>
</dbReference>
<dbReference type="InterPro" id="IPR000440">
    <property type="entry name" value="NADH_UbQ/plastoQ_OxRdtase_su3"/>
</dbReference>
<dbReference type="InterPro" id="IPR038430">
    <property type="entry name" value="NDAH_ubi_oxred_su3_sf"/>
</dbReference>
<dbReference type="PANTHER" id="PTHR11058">
    <property type="entry name" value="NADH-UBIQUINONE OXIDOREDUCTASE CHAIN 3"/>
    <property type="match status" value="1"/>
</dbReference>
<dbReference type="PANTHER" id="PTHR11058:SF9">
    <property type="entry name" value="NADH-UBIQUINONE OXIDOREDUCTASE CHAIN 3"/>
    <property type="match status" value="1"/>
</dbReference>
<dbReference type="Pfam" id="PF00507">
    <property type="entry name" value="Oxidored_q4"/>
    <property type="match status" value="1"/>
</dbReference>
<gene>
    <name evidence="1" type="primary">MT-ND3</name>
    <name type="synonym">MTND3</name>
    <name type="synonym">NADH3</name>
    <name type="synonym">ND3</name>
</gene>
<accession>O21563</accession>